<sequence>MTAILERRESTSLWGRFCNWITSTENRLYIGWFGVLMIPTLLTATSVFIIAFIAAPPVDIDGIREPVSGSLLYGNNIISGAIIPTSAAIGLHFYPIWEAASVDEWLYNGGPYELIVLHFLLGVACYMGREWELSFRLGMRPWIAVAYSAPVAAATAVFLIYPIGQGSFSDGMPLGISGTFNFMIVFQAEHNILMHPFHMLGVAGVFGGSLFSAMHGSLVTSSLIRETTENESANEGYRFGQEEETYNIVAAHGYFGRLIFQYASFNNSRSLHFFLAAWPVVGIWFTALGISTMAFNLNGFNFNQSVVDSQGRVINTWADIINRANLGMEVMHERNAHNFPLDLAALEVPSLNG</sequence>
<organism>
    <name type="scientific">Oryza sativa subsp. indica</name>
    <name type="common">Rice</name>
    <dbReference type="NCBI Taxonomy" id="39946"/>
    <lineage>
        <taxon>Eukaryota</taxon>
        <taxon>Viridiplantae</taxon>
        <taxon>Streptophyta</taxon>
        <taxon>Embryophyta</taxon>
        <taxon>Tracheophyta</taxon>
        <taxon>Spermatophyta</taxon>
        <taxon>Magnoliopsida</taxon>
        <taxon>Liliopsida</taxon>
        <taxon>Poales</taxon>
        <taxon>Poaceae</taxon>
        <taxon>BOP clade</taxon>
        <taxon>Oryzoideae</taxon>
        <taxon>Oryzeae</taxon>
        <taxon>Oryzinae</taxon>
        <taxon>Oryza</taxon>
        <taxon>Oryza sativa</taxon>
    </lineage>
</organism>
<protein>
    <recommendedName>
        <fullName evidence="1">Photosystem II protein D1</fullName>
        <shortName evidence="1">PSII D1 protein</shortName>
        <ecNumber evidence="1">1.10.3.9</ecNumber>
    </recommendedName>
    <alternativeName>
        <fullName evidence="1">Photosystem II Q(B) protein</fullName>
    </alternativeName>
</protein>
<geneLocation type="chloroplast"/>
<comment type="function">
    <text evidence="1">Photosystem II (PSII) is a light-driven water:plastoquinone oxidoreductase that uses light energy to abstract electrons from H(2)O, generating O(2) and a proton gradient subsequently used for ATP formation. It consists of a core antenna complex that captures photons, and an electron transfer chain that converts photonic excitation into a charge separation. The D1/D2 (PsbA/PsbD) reaction center heterodimer binds P680, the primary electron donor of PSII as well as several subsequent electron acceptors.</text>
</comment>
<comment type="catalytic activity">
    <reaction evidence="1">
        <text>2 a plastoquinone + 4 hnu + 2 H2O = 2 a plastoquinol + O2</text>
        <dbReference type="Rhea" id="RHEA:36359"/>
        <dbReference type="Rhea" id="RHEA-COMP:9561"/>
        <dbReference type="Rhea" id="RHEA-COMP:9562"/>
        <dbReference type="ChEBI" id="CHEBI:15377"/>
        <dbReference type="ChEBI" id="CHEBI:15379"/>
        <dbReference type="ChEBI" id="CHEBI:17757"/>
        <dbReference type="ChEBI" id="CHEBI:30212"/>
        <dbReference type="ChEBI" id="CHEBI:62192"/>
        <dbReference type="EC" id="1.10.3.9"/>
    </reaction>
</comment>
<comment type="cofactor">
    <text evidence="1">The D1/D2 heterodimer binds P680, chlorophylls that are the primary electron donor of PSII, and subsequent electron acceptors. It shares a non-heme iron and each subunit binds pheophytin, quinone, additional chlorophylls, carotenoids and lipids. D1 provides most of the ligands for the Mn4-Ca-O5 cluster of the oxygen-evolving complex (OEC). There is also a Cl(-1) ion associated with D1 and D2, which is required for oxygen evolution. The PSII complex binds additional chlorophylls, carotenoids and specific lipids.</text>
</comment>
<comment type="subunit">
    <text evidence="1">PSII is composed of 1 copy each of membrane proteins PsbA, PsbB, PsbC, PsbD, PsbE, PsbF, PsbH, PsbI, PsbJ, PsbK, PsbL, PsbM, PsbT, PsbX, PsbY, PsbZ, Psb30/Ycf12, at least 3 peripheral proteins of the oxygen-evolving complex and a large number of cofactors. It forms dimeric complexes.</text>
</comment>
<comment type="subcellular location">
    <subcellularLocation>
        <location evidence="1">Plastid</location>
        <location evidence="1">Chloroplast thylakoid membrane</location>
        <topology evidence="1">Multi-pass membrane protein</topology>
    </subcellularLocation>
</comment>
<comment type="PTM">
    <text evidence="1">Tyr-161 forms a radical intermediate that is referred to as redox-active TyrZ, YZ or Y-Z.</text>
</comment>
<comment type="PTM">
    <text evidence="1">C-terminally processed by CTPA; processing is essential to allow assembly of the oxygen-evolving complex and thus photosynthetic growth.</text>
</comment>
<comment type="miscellaneous">
    <text evidence="1">2 of the reaction center chlorophylls (ChlD1 and ChlD2) are entirely coordinated by water.</text>
</comment>
<comment type="miscellaneous">
    <text evidence="1">Herbicides such as atrazine, BNT, diuron or ioxynil bind in the Q(B) binding site and block subsequent electron transfer.</text>
</comment>
<comment type="similarity">
    <text evidence="1">Belongs to the reaction center PufL/M/PsbA/D family.</text>
</comment>
<keyword id="KW-0007">Acetylation</keyword>
<keyword id="KW-0106">Calcium</keyword>
<keyword id="KW-0148">Chlorophyll</keyword>
<keyword id="KW-0150">Chloroplast</keyword>
<keyword id="KW-0157">Chromophore</keyword>
<keyword id="KW-0249">Electron transport</keyword>
<keyword id="KW-0359">Herbicide resistance</keyword>
<keyword id="KW-0408">Iron</keyword>
<keyword id="KW-0460">Magnesium</keyword>
<keyword id="KW-0464">Manganese</keyword>
<keyword id="KW-0472">Membrane</keyword>
<keyword id="KW-0479">Metal-binding</keyword>
<keyword id="KW-0560">Oxidoreductase</keyword>
<keyword id="KW-0597">Phosphoprotein</keyword>
<keyword id="KW-0602">Photosynthesis</keyword>
<keyword id="KW-0604">Photosystem II</keyword>
<keyword id="KW-0934">Plastid</keyword>
<keyword id="KW-1185">Reference proteome</keyword>
<keyword id="KW-0793">Thylakoid</keyword>
<keyword id="KW-0812">Transmembrane</keyword>
<keyword id="KW-1133">Transmembrane helix</keyword>
<keyword id="KW-0813">Transport</keyword>
<reference key="1">
    <citation type="journal article" date="2004" name="Plant Physiol.">
        <title>A comparison of rice chloroplast genomes.</title>
        <authorList>
            <person name="Tang J."/>
            <person name="Xia H."/>
            <person name="Cao M."/>
            <person name="Zhang X."/>
            <person name="Zeng W."/>
            <person name="Hu S."/>
            <person name="Tong W."/>
            <person name="Wang J."/>
            <person name="Wang J."/>
            <person name="Yu J."/>
            <person name="Yang H."/>
            <person name="Zhu L."/>
        </authorList>
    </citation>
    <scope>NUCLEOTIDE SEQUENCE [LARGE SCALE GENOMIC DNA]</scope>
    <source>
        <strain>cv. 93-11</strain>
    </source>
</reference>
<proteinExistence type="inferred from homology"/>
<name>PSBA_ORYSI</name>
<evidence type="ECO:0000255" key="1">
    <source>
        <dbReference type="HAMAP-Rule" id="MF_01379"/>
    </source>
</evidence>
<accession>P0C433</accession>
<accession>P12094</accession>
<accession>Q6QY90</accession>
<accession>Q7DNA9</accession>
<feature type="initiator methionine" description="Removed" evidence="1">
    <location>
        <position position="1"/>
    </location>
</feature>
<feature type="chain" id="PRO_0000290037" description="Photosystem II protein D1" evidence="1">
    <location>
        <begin position="2"/>
        <end position="344"/>
    </location>
</feature>
<feature type="propeptide" id="PRO_0000316470" evidence="1">
    <location>
        <begin position="345"/>
        <end position="353"/>
    </location>
</feature>
<feature type="transmembrane region" description="Helical" evidence="1">
    <location>
        <begin position="29"/>
        <end position="46"/>
    </location>
</feature>
<feature type="transmembrane region" description="Helical" evidence="1">
    <location>
        <begin position="118"/>
        <end position="133"/>
    </location>
</feature>
<feature type="transmembrane region" description="Helical" evidence="1">
    <location>
        <begin position="142"/>
        <end position="156"/>
    </location>
</feature>
<feature type="transmembrane region" description="Helical" evidence="1">
    <location>
        <begin position="197"/>
        <end position="218"/>
    </location>
</feature>
<feature type="transmembrane region" description="Helical" evidence="1">
    <location>
        <begin position="274"/>
        <end position="288"/>
    </location>
</feature>
<feature type="binding site" description="axial binding residue" evidence="1">
    <location>
        <position position="118"/>
    </location>
    <ligand>
        <name>chlorophyll a</name>
        <dbReference type="ChEBI" id="CHEBI:58416"/>
        <label>ChlzD1</label>
    </ligand>
    <ligandPart>
        <name>Mg</name>
        <dbReference type="ChEBI" id="CHEBI:25107"/>
    </ligandPart>
</feature>
<feature type="binding site" evidence="1">
    <location>
        <position position="126"/>
    </location>
    <ligand>
        <name>pheophytin a</name>
        <dbReference type="ChEBI" id="CHEBI:136840"/>
        <label>D1</label>
    </ligand>
</feature>
<feature type="binding site" evidence="1">
    <location>
        <position position="170"/>
    </location>
    <ligand>
        <name>[CaMn4O5] cluster</name>
        <dbReference type="ChEBI" id="CHEBI:189552"/>
    </ligand>
</feature>
<feature type="binding site" evidence="1">
    <location>
        <position position="189"/>
    </location>
    <ligand>
        <name>[CaMn4O5] cluster</name>
        <dbReference type="ChEBI" id="CHEBI:189552"/>
    </ligand>
</feature>
<feature type="binding site" description="axial binding residue" evidence="1">
    <location>
        <position position="198"/>
    </location>
    <ligand>
        <name>chlorophyll a</name>
        <dbReference type="ChEBI" id="CHEBI:58416"/>
        <label>PD1</label>
    </ligand>
    <ligandPart>
        <name>Mg</name>
        <dbReference type="ChEBI" id="CHEBI:25107"/>
    </ligandPart>
</feature>
<feature type="binding site" evidence="1">
    <location>
        <position position="215"/>
    </location>
    <ligand>
        <name>a quinone</name>
        <dbReference type="ChEBI" id="CHEBI:132124"/>
        <label>B</label>
    </ligand>
</feature>
<feature type="binding site" evidence="1">
    <location>
        <position position="215"/>
    </location>
    <ligand>
        <name>Fe cation</name>
        <dbReference type="ChEBI" id="CHEBI:24875"/>
        <note>ligand shared with heterodimeric partner</note>
    </ligand>
</feature>
<feature type="binding site" evidence="1">
    <location>
        <begin position="264"/>
        <end position="265"/>
    </location>
    <ligand>
        <name>a quinone</name>
        <dbReference type="ChEBI" id="CHEBI:132124"/>
        <label>B</label>
    </ligand>
</feature>
<feature type="binding site" evidence="1">
    <location>
        <position position="272"/>
    </location>
    <ligand>
        <name>Fe cation</name>
        <dbReference type="ChEBI" id="CHEBI:24875"/>
        <note>ligand shared with heterodimeric partner</note>
    </ligand>
</feature>
<feature type="binding site" evidence="1">
    <location>
        <position position="332"/>
    </location>
    <ligand>
        <name>[CaMn4O5] cluster</name>
        <dbReference type="ChEBI" id="CHEBI:189552"/>
    </ligand>
</feature>
<feature type="binding site" evidence="1">
    <location>
        <position position="333"/>
    </location>
    <ligand>
        <name>[CaMn4O5] cluster</name>
        <dbReference type="ChEBI" id="CHEBI:189552"/>
    </ligand>
</feature>
<feature type="binding site" evidence="1">
    <location>
        <position position="342"/>
    </location>
    <ligand>
        <name>[CaMn4O5] cluster</name>
        <dbReference type="ChEBI" id="CHEBI:189552"/>
    </ligand>
</feature>
<feature type="binding site" evidence="1">
    <location>
        <position position="344"/>
    </location>
    <ligand>
        <name>[CaMn4O5] cluster</name>
        <dbReference type="ChEBI" id="CHEBI:189552"/>
    </ligand>
</feature>
<feature type="site" description="Tyrosine radical intermediate" evidence="1">
    <location>
        <position position="161"/>
    </location>
</feature>
<feature type="site" description="Stabilizes free radical intermediate" evidence="1">
    <location>
        <position position="190"/>
    </location>
</feature>
<feature type="site" description="Cleavage; by CTPA" evidence="1">
    <location>
        <begin position="344"/>
        <end position="345"/>
    </location>
</feature>
<feature type="modified residue" description="N-acetylthreonine" evidence="1">
    <location>
        <position position="2"/>
    </location>
</feature>
<feature type="modified residue" description="Phosphothreonine" evidence="1">
    <location>
        <position position="2"/>
    </location>
</feature>
<dbReference type="EC" id="1.10.3.9" evidence="1"/>
<dbReference type="EMBL" id="AY522329">
    <property type="protein sequence ID" value="AAS46102.1"/>
    <property type="molecule type" value="Genomic_DNA"/>
</dbReference>
<dbReference type="RefSeq" id="YP_009161344.1">
    <property type="nucleotide sequence ID" value="NC_027678.1"/>
</dbReference>
<dbReference type="RefSeq" id="YP_654199.1">
    <property type="nucleotide sequence ID" value="NC_008155.1"/>
</dbReference>
<dbReference type="SMR" id="P0C433"/>
<dbReference type="STRING" id="39946.P0C433"/>
<dbReference type="EnsemblPlants" id="OsKYG_02g0012430.01">
    <property type="protein sequence ID" value="OsKYG_02g0012430.01"/>
    <property type="gene ID" value="OsKYG_02g0012430"/>
</dbReference>
<dbReference type="EnsemblPlants" id="OsLiXu_Ung0019540.01">
    <property type="protein sequence ID" value="OsLiXu_Ung0019540.01"/>
    <property type="gene ID" value="OsLiXu_Ung0019540"/>
</dbReference>
<dbReference type="EnsemblPlants" id="OsLiXu_Ung0019550.01">
    <property type="protein sequence ID" value="OsLiXu_Ung0019550.01"/>
    <property type="gene ID" value="OsLiXu_Ung0019550"/>
</dbReference>
<dbReference type="EnsemblPlants" id="OsLiXu_Ung0019740.01">
    <property type="protein sequence ID" value="OsLiXu_Ung0019740.01"/>
    <property type="gene ID" value="OsLiXu_Ung0019740"/>
</dbReference>
<dbReference type="EnsemblPlants" id="OsLiXu_Ung0020010.01">
    <property type="protein sequence ID" value="OsLiXu_Ung0020010.01"/>
    <property type="gene ID" value="OsLiXu_Ung0020010"/>
</dbReference>
<dbReference type="EnsemblPlants" id="OsZS97_08G007210_01">
    <property type="protein sequence ID" value="OsZS97_08G007210_01"/>
    <property type="gene ID" value="OsZS97_08G007210"/>
</dbReference>
<dbReference type="GeneID" id="4126916"/>
<dbReference type="Gramene" id="OsKYG_02g0012430.01">
    <property type="protein sequence ID" value="OsKYG_02g0012430.01"/>
    <property type="gene ID" value="OsKYG_02g0012430"/>
</dbReference>
<dbReference type="Gramene" id="OsLiXu_Ung0019540.01">
    <property type="protein sequence ID" value="OsLiXu_Ung0019540.01"/>
    <property type="gene ID" value="OsLiXu_Ung0019540"/>
</dbReference>
<dbReference type="Gramene" id="OsLiXu_Ung0019550.01">
    <property type="protein sequence ID" value="OsLiXu_Ung0019550.01"/>
    <property type="gene ID" value="OsLiXu_Ung0019550"/>
</dbReference>
<dbReference type="Gramene" id="OsLiXu_Ung0019740.01">
    <property type="protein sequence ID" value="OsLiXu_Ung0019740.01"/>
    <property type="gene ID" value="OsLiXu_Ung0019740"/>
</dbReference>
<dbReference type="Gramene" id="OsLiXu_Ung0020010.01">
    <property type="protein sequence ID" value="OsLiXu_Ung0020010.01"/>
    <property type="gene ID" value="OsLiXu_Ung0020010"/>
</dbReference>
<dbReference type="Gramene" id="OsZS97_08G007210_01">
    <property type="protein sequence ID" value="OsZS97_08G007210_01"/>
    <property type="gene ID" value="OsZS97_08G007210"/>
</dbReference>
<dbReference type="Proteomes" id="UP000007015">
    <property type="component" value="Chloroplast"/>
</dbReference>
<dbReference type="GO" id="GO:0009535">
    <property type="term" value="C:chloroplast thylakoid membrane"/>
    <property type="evidence" value="ECO:0007669"/>
    <property type="project" value="UniProtKB-SubCell"/>
</dbReference>
<dbReference type="GO" id="GO:0009523">
    <property type="term" value="C:photosystem II"/>
    <property type="evidence" value="ECO:0007669"/>
    <property type="project" value="UniProtKB-KW"/>
</dbReference>
<dbReference type="GO" id="GO:0009536">
    <property type="term" value="C:plastid"/>
    <property type="evidence" value="ECO:0000305"/>
    <property type="project" value="Gramene"/>
</dbReference>
<dbReference type="GO" id="GO:0016168">
    <property type="term" value="F:chlorophyll binding"/>
    <property type="evidence" value="ECO:0007669"/>
    <property type="project" value="UniProtKB-UniRule"/>
</dbReference>
<dbReference type="GO" id="GO:0045156">
    <property type="term" value="F:electron transporter, transferring electrons within the cyclic electron transport pathway of photosynthesis activity"/>
    <property type="evidence" value="ECO:0007669"/>
    <property type="project" value="InterPro"/>
</dbReference>
<dbReference type="GO" id="GO:0005506">
    <property type="term" value="F:iron ion binding"/>
    <property type="evidence" value="ECO:0007669"/>
    <property type="project" value="UniProtKB-UniRule"/>
</dbReference>
<dbReference type="GO" id="GO:0016682">
    <property type="term" value="F:oxidoreductase activity, acting on diphenols and related substances as donors, oxygen as acceptor"/>
    <property type="evidence" value="ECO:0007669"/>
    <property type="project" value="UniProtKB-UniRule"/>
</dbReference>
<dbReference type="GO" id="GO:0010242">
    <property type="term" value="F:oxygen evolving activity"/>
    <property type="evidence" value="ECO:0007669"/>
    <property type="project" value="UniProtKB-EC"/>
</dbReference>
<dbReference type="GO" id="GO:0009772">
    <property type="term" value="P:photosynthetic electron transport in photosystem II"/>
    <property type="evidence" value="ECO:0007669"/>
    <property type="project" value="InterPro"/>
</dbReference>
<dbReference type="GO" id="GO:0009635">
    <property type="term" value="P:response to herbicide"/>
    <property type="evidence" value="ECO:0007669"/>
    <property type="project" value="UniProtKB-KW"/>
</dbReference>
<dbReference type="CDD" id="cd09289">
    <property type="entry name" value="Photosystem-II_D1"/>
    <property type="match status" value="1"/>
</dbReference>
<dbReference type="FunFam" id="1.20.85.10:FF:000002">
    <property type="entry name" value="Photosystem II protein D1"/>
    <property type="match status" value="1"/>
</dbReference>
<dbReference type="Gene3D" id="1.20.85.10">
    <property type="entry name" value="Photosystem II protein D1-like"/>
    <property type="match status" value="1"/>
</dbReference>
<dbReference type="HAMAP" id="MF_01379">
    <property type="entry name" value="PSII_PsbA_D1"/>
    <property type="match status" value="1"/>
</dbReference>
<dbReference type="InterPro" id="IPR055266">
    <property type="entry name" value="D1/D2"/>
</dbReference>
<dbReference type="InterPro" id="IPR036854">
    <property type="entry name" value="Photo_II_D1/D2_sf"/>
</dbReference>
<dbReference type="InterPro" id="IPR000484">
    <property type="entry name" value="Photo_RC_L/M"/>
</dbReference>
<dbReference type="InterPro" id="IPR055265">
    <property type="entry name" value="Photo_RC_L/M_CS"/>
</dbReference>
<dbReference type="InterPro" id="IPR005867">
    <property type="entry name" value="PSII_D1"/>
</dbReference>
<dbReference type="NCBIfam" id="TIGR01151">
    <property type="entry name" value="psbA"/>
    <property type="match status" value="1"/>
</dbReference>
<dbReference type="PANTHER" id="PTHR33149:SF12">
    <property type="entry name" value="PHOTOSYSTEM II D2 PROTEIN"/>
    <property type="match status" value="1"/>
</dbReference>
<dbReference type="PANTHER" id="PTHR33149">
    <property type="entry name" value="PHOTOSYSTEM II PROTEIN D1"/>
    <property type="match status" value="1"/>
</dbReference>
<dbReference type="Pfam" id="PF00124">
    <property type="entry name" value="Photo_RC"/>
    <property type="match status" value="1"/>
</dbReference>
<dbReference type="PRINTS" id="PR00256">
    <property type="entry name" value="REACTNCENTRE"/>
</dbReference>
<dbReference type="SUPFAM" id="SSF81483">
    <property type="entry name" value="Bacterial photosystem II reaction centre, L and M subunits"/>
    <property type="match status" value="1"/>
</dbReference>
<dbReference type="PROSITE" id="PS00244">
    <property type="entry name" value="REACTION_CENTER"/>
    <property type="match status" value="1"/>
</dbReference>
<gene>
    <name evidence="1" type="primary">psbA</name>
    <name type="ORF">9311001</name>
</gene>